<reference key="1">
    <citation type="journal article" date="2004" name="Proc. Natl. Acad. Sci. U.S.A.">
        <title>The louse-borne human pathogen Bartonella quintana is a genomic derivative of the zoonotic agent Bartonella henselae.</title>
        <authorList>
            <person name="Alsmark U.C.M."/>
            <person name="Frank A.C."/>
            <person name="Karlberg E.O."/>
            <person name="Legault B.-A."/>
            <person name="Ardell D.H."/>
            <person name="Canbaeck B."/>
            <person name="Eriksson A.-S."/>
            <person name="Naeslund A.K."/>
            <person name="Handley S.A."/>
            <person name="Huvet M."/>
            <person name="La Scola B."/>
            <person name="Holmberg M."/>
            <person name="Andersson S.G.E."/>
        </authorList>
    </citation>
    <scope>NUCLEOTIDE SEQUENCE [LARGE SCALE GENOMIC DNA]</scope>
    <source>
        <strain>ATCC 49882 / DSM 28221 / CCUG 30454 / Houston 1</strain>
    </source>
</reference>
<accession>Q6G253</accession>
<sequence>MEVIRKTFFKKSRLEETSLEEIQLILASASPRRLALLAQIGLDPHQVYATNIDETPKLREHPANLAKRLAKEKALKAQETFLWRDQSSGEKVSAQKIVILAADTVVAVGRTILPSPESEDEAYECLRFLSGRAHKVYGAVCALNECGKITVKLVESCVRFRRLTSPMMEAYLYSGEWQGKAGGYAIQGKAGAFVVYIAGSYSNVVGLPLAETMDLLTAYHYPLLTHWNGKTH</sequence>
<proteinExistence type="inferred from homology"/>
<dbReference type="EC" id="3.6.1.9" evidence="1"/>
<dbReference type="EMBL" id="BX897699">
    <property type="protein sequence ID" value="CAF28178.1"/>
    <property type="molecule type" value="Genomic_DNA"/>
</dbReference>
<dbReference type="RefSeq" id="WP_011181190.1">
    <property type="nucleotide sequence ID" value="NZ_LRIJ02000001.1"/>
</dbReference>
<dbReference type="SMR" id="Q6G253"/>
<dbReference type="PaxDb" id="283166-BH14130"/>
<dbReference type="EnsemblBacteria" id="CAF28178">
    <property type="protein sequence ID" value="CAF28178"/>
    <property type="gene ID" value="BH14130"/>
</dbReference>
<dbReference type="KEGG" id="bhe:BH14130"/>
<dbReference type="eggNOG" id="COG0424">
    <property type="taxonomic scope" value="Bacteria"/>
</dbReference>
<dbReference type="OrthoDB" id="9807767at2"/>
<dbReference type="Proteomes" id="UP000000421">
    <property type="component" value="Chromosome"/>
</dbReference>
<dbReference type="GO" id="GO:0005737">
    <property type="term" value="C:cytoplasm"/>
    <property type="evidence" value="ECO:0007669"/>
    <property type="project" value="UniProtKB-SubCell"/>
</dbReference>
<dbReference type="GO" id="GO:0036218">
    <property type="term" value="F:dTTP diphosphatase activity"/>
    <property type="evidence" value="ECO:0007669"/>
    <property type="project" value="RHEA"/>
</dbReference>
<dbReference type="GO" id="GO:0036221">
    <property type="term" value="F:UTP diphosphatase activity"/>
    <property type="evidence" value="ECO:0007669"/>
    <property type="project" value="RHEA"/>
</dbReference>
<dbReference type="GO" id="GO:0009117">
    <property type="term" value="P:nucleotide metabolic process"/>
    <property type="evidence" value="ECO:0007669"/>
    <property type="project" value="UniProtKB-KW"/>
</dbReference>
<dbReference type="CDD" id="cd00555">
    <property type="entry name" value="Maf"/>
    <property type="match status" value="1"/>
</dbReference>
<dbReference type="Gene3D" id="3.90.950.10">
    <property type="match status" value="1"/>
</dbReference>
<dbReference type="HAMAP" id="MF_00528">
    <property type="entry name" value="Maf"/>
    <property type="match status" value="1"/>
</dbReference>
<dbReference type="InterPro" id="IPR029001">
    <property type="entry name" value="ITPase-like_fam"/>
</dbReference>
<dbReference type="InterPro" id="IPR003697">
    <property type="entry name" value="Maf-like"/>
</dbReference>
<dbReference type="NCBIfam" id="TIGR00172">
    <property type="entry name" value="maf"/>
    <property type="match status" value="1"/>
</dbReference>
<dbReference type="PANTHER" id="PTHR43213">
    <property type="entry name" value="BIFUNCTIONAL DTTP/UTP PYROPHOSPHATASE/METHYLTRANSFERASE PROTEIN-RELATED"/>
    <property type="match status" value="1"/>
</dbReference>
<dbReference type="PANTHER" id="PTHR43213:SF5">
    <property type="entry name" value="BIFUNCTIONAL DTTP_UTP PYROPHOSPHATASE_METHYLTRANSFERASE PROTEIN-RELATED"/>
    <property type="match status" value="1"/>
</dbReference>
<dbReference type="Pfam" id="PF02545">
    <property type="entry name" value="Maf"/>
    <property type="match status" value="1"/>
</dbReference>
<dbReference type="PIRSF" id="PIRSF006305">
    <property type="entry name" value="Maf"/>
    <property type="match status" value="1"/>
</dbReference>
<dbReference type="SUPFAM" id="SSF52972">
    <property type="entry name" value="ITPase-like"/>
    <property type="match status" value="1"/>
</dbReference>
<gene>
    <name type="ordered locus">BH14130</name>
</gene>
<evidence type="ECO:0000255" key="1">
    <source>
        <dbReference type="HAMAP-Rule" id="MF_00528"/>
    </source>
</evidence>
<comment type="function">
    <text evidence="1">Nucleoside triphosphate pyrophosphatase that hydrolyzes dTTP and UTP. May have a dual role in cell division arrest and in preventing the incorporation of modified nucleotides into cellular nucleic acids.</text>
</comment>
<comment type="catalytic activity">
    <reaction evidence="1">
        <text>dTTP + H2O = dTMP + diphosphate + H(+)</text>
        <dbReference type="Rhea" id="RHEA:28534"/>
        <dbReference type="ChEBI" id="CHEBI:15377"/>
        <dbReference type="ChEBI" id="CHEBI:15378"/>
        <dbReference type="ChEBI" id="CHEBI:33019"/>
        <dbReference type="ChEBI" id="CHEBI:37568"/>
        <dbReference type="ChEBI" id="CHEBI:63528"/>
        <dbReference type="EC" id="3.6.1.9"/>
    </reaction>
</comment>
<comment type="catalytic activity">
    <reaction evidence="1">
        <text>UTP + H2O = UMP + diphosphate + H(+)</text>
        <dbReference type="Rhea" id="RHEA:29395"/>
        <dbReference type="ChEBI" id="CHEBI:15377"/>
        <dbReference type="ChEBI" id="CHEBI:15378"/>
        <dbReference type="ChEBI" id="CHEBI:33019"/>
        <dbReference type="ChEBI" id="CHEBI:46398"/>
        <dbReference type="ChEBI" id="CHEBI:57865"/>
        <dbReference type="EC" id="3.6.1.9"/>
    </reaction>
</comment>
<comment type="cofactor">
    <cofactor evidence="1">
        <name>a divalent metal cation</name>
        <dbReference type="ChEBI" id="CHEBI:60240"/>
    </cofactor>
</comment>
<comment type="subcellular location">
    <subcellularLocation>
        <location evidence="1">Cytoplasm</location>
    </subcellularLocation>
</comment>
<comment type="similarity">
    <text evidence="1">Belongs to the Maf family. YhdE subfamily.</text>
</comment>
<feature type="chain" id="PRO_0000267251" description="dTTP/UTP pyrophosphatase">
    <location>
        <begin position="1"/>
        <end position="232"/>
    </location>
</feature>
<feature type="active site" description="Proton acceptor" evidence="1">
    <location>
        <position position="103"/>
    </location>
</feature>
<feature type="site" description="Important for substrate specificity" evidence="1">
    <location>
        <position position="32"/>
    </location>
</feature>
<feature type="site" description="Important for substrate specificity" evidence="1">
    <location>
        <position position="104"/>
    </location>
</feature>
<feature type="site" description="Important for substrate specificity" evidence="1">
    <location>
        <position position="187"/>
    </location>
</feature>
<keyword id="KW-0963">Cytoplasm</keyword>
<keyword id="KW-0378">Hydrolase</keyword>
<keyword id="KW-0546">Nucleotide metabolism</keyword>
<protein>
    <recommendedName>
        <fullName evidence="1">dTTP/UTP pyrophosphatase</fullName>
        <shortName evidence="1">dTTPase/UTPase</shortName>
        <ecNumber evidence="1">3.6.1.9</ecNumber>
    </recommendedName>
    <alternativeName>
        <fullName evidence="1">Nucleoside triphosphate pyrophosphatase</fullName>
    </alternativeName>
    <alternativeName>
        <fullName evidence="1">Nucleotide pyrophosphatase</fullName>
        <shortName evidence="1">Nucleotide PPase</shortName>
    </alternativeName>
</protein>
<organism>
    <name type="scientific">Bartonella henselae (strain ATCC 49882 / DSM 28221 / CCUG 30454 / Houston 1)</name>
    <name type="common">Rochalimaea henselae</name>
    <dbReference type="NCBI Taxonomy" id="283166"/>
    <lineage>
        <taxon>Bacteria</taxon>
        <taxon>Pseudomonadati</taxon>
        <taxon>Pseudomonadota</taxon>
        <taxon>Alphaproteobacteria</taxon>
        <taxon>Hyphomicrobiales</taxon>
        <taxon>Bartonellaceae</taxon>
        <taxon>Bartonella</taxon>
    </lineage>
</organism>
<name>NTPPA_BARHE</name>